<sequence length="152" mass="17768">MKLIASNKKAYFDYEILETLEAGLALLGSEVKALRQTRVNLKDNFVKIIKGEAFLFGVHISYLDTIHAYYKPNERRERKLLLHKKQLLKWQIEASKERLSIVGLKLYFNQRNKAKIQIALVKGKKLHDKRQSLKEKALNKEILADLKHHFKG</sequence>
<feature type="chain" id="PRO_1000090156" description="SsrA-binding protein">
    <location>
        <begin position="1"/>
        <end position="152"/>
    </location>
</feature>
<evidence type="ECO:0000255" key="1">
    <source>
        <dbReference type="HAMAP-Rule" id="MF_00023"/>
    </source>
</evidence>
<organism>
    <name type="scientific">Helicobacter pylori (strain Shi470)</name>
    <dbReference type="NCBI Taxonomy" id="512562"/>
    <lineage>
        <taxon>Bacteria</taxon>
        <taxon>Pseudomonadati</taxon>
        <taxon>Campylobacterota</taxon>
        <taxon>Epsilonproteobacteria</taxon>
        <taxon>Campylobacterales</taxon>
        <taxon>Helicobacteraceae</taxon>
        <taxon>Helicobacter</taxon>
    </lineage>
</organism>
<protein>
    <recommendedName>
        <fullName evidence="1">SsrA-binding protein</fullName>
    </recommendedName>
    <alternativeName>
        <fullName evidence="1">Small protein B</fullName>
    </alternativeName>
</protein>
<accession>B2UVI9</accession>
<keyword id="KW-0963">Cytoplasm</keyword>
<keyword id="KW-0694">RNA-binding</keyword>
<gene>
    <name evidence="1" type="primary">smpB</name>
    <name type="ordered locus">HPSH_07390</name>
</gene>
<name>SSRP_HELPS</name>
<dbReference type="EMBL" id="CP001072">
    <property type="protein sequence ID" value="ACD48871.1"/>
    <property type="molecule type" value="Genomic_DNA"/>
</dbReference>
<dbReference type="RefSeq" id="WP_000766474.1">
    <property type="nucleotide sequence ID" value="NC_010698.2"/>
</dbReference>
<dbReference type="SMR" id="B2UVI9"/>
<dbReference type="GeneID" id="93236356"/>
<dbReference type="KEGG" id="hps:HPSH_07390"/>
<dbReference type="HOGENOM" id="CLU_108953_3_1_7"/>
<dbReference type="GO" id="GO:0005829">
    <property type="term" value="C:cytosol"/>
    <property type="evidence" value="ECO:0007669"/>
    <property type="project" value="TreeGrafter"/>
</dbReference>
<dbReference type="GO" id="GO:0003723">
    <property type="term" value="F:RNA binding"/>
    <property type="evidence" value="ECO:0007669"/>
    <property type="project" value="UniProtKB-UniRule"/>
</dbReference>
<dbReference type="GO" id="GO:0070929">
    <property type="term" value="P:trans-translation"/>
    <property type="evidence" value="ECO:0007669"/>
    <property type="project" value="UniProtKB-UniRule"/>
</dbReference>
<dbReference type="CDD" id="cd09294">
    <property type="entry name" value="SmpB"/>
    <property type="match status" value="1"/>
</dbReference>
<dbReference type="Gene3D" id="2.40.280.10">
    <property type="match status" value="1"/>
</dbReference>
<dbReference type="HAMAP" id="MF_00023">
    <property type="entry name" value="SmpB"/>
    <property type="match status" value="1"/>
</dbReference>
<dbReference type="InterPro" id="IPR023620">
    <property type="entry name" value="SmpB"/>
</dbReference>
<dbReference type="InterPro" id="IPR000037">
    <property type="entry name" value="SsrA-bd_prot"/>
</dbReference>
<dbReference type="InterPro" id="IPR020081">
    <property type="entry name" value="SsrA-bd_prot_CS"/>
</dbReference>
<dbReference type="NCBIfam" id="NF003843">
    <property type="entry name" value="PRK05422.1"/>
    <property type="match status" value="1"/>
</dbReference>
<dbReference type="NCBIfam" id="TIGR00086">
    <property type="entry name" value="smpB"/>
    <property type="match status" value="1"/>
</dbReference>
<dbReference type="PANTHER" id="PTHR30308:SF2">
    <property type="entry name" value="SSRA-BINDING PROTEIN"/>
    <property type="match status" value="1"/>
</dbReference>
<dbReference type="PANTHER" id="PTHR30308">
    <property type="entry name" value="TMRNA-BINDING COMPONENT OF TRANS-TRANSLATION TAGGING COMPLEX"/>
    <property type="match status" value="1"/>
</dbReference>
<dbReference type="Pfam" id="PF01668">
    <property type="entry name" value="SmpB"/>
    <property type="match status" value="1"/>
</dbReference>
<dbReference type="SUPFAM" id="SSF74982">
    <property type="entry name" value="Small protein B (SmpB)"/>
    <property type="match status" value="1"/>
</dbReference>
<dbReference type="PROSITE" id="PS01317">
    <property type="entry name" value="SSRP"/>
    <property type="match status" value="1"/>
</dbReference>
<reference key="1">
    <citation type="submission" date="2008-05" db="EMBL/GenBank/DDBJ databases">
        <title>Genome sequence of Helicobacter pylori from the remote Amazon: traces of Asian ancestry of the first Americans.</title>
        <authorList>
            <person name="Kersulyte D."/>
            <person name="Kalia A."/>
            <person name="Gilman R.H."/>
            <person name="Berg D.E."/>
        </authorList>
    </citation>
    <scope>NUCLEOTIDE SEQUENCE [LARGE SCALE GENOMIC DNA]</scope>
    <source>
        <strain>Shi470</strain>
    </source>
</reference>
<proteinExistence type="inferred from homology"/>
<comment type="function">
    <text evidence="1">Required for rescue of stalled ribosomes mediated by trans-translation. Binds to transfer-messenger RNA (tmRNA), required for stable association of tmRNA with ribosomes. tmRNA and SmpB together mimic tRNA shape, replacing the anticodon stem-loop with SmpB. tmRNA is encoded by the ssrA gene; the 2 termini fold to resemble tRNA(Ala) and it encodes a 'tag peptide', a short internal open reading frame. During trans-translation Ala-aminoacylated tmRNA acts like a tRNA, entering the A-site of stalled ribosomes, displacing the stalled mRNA. The ribosome then switches to translate the ORF on the tmRNA; the nascent peptide is terminated with the 'tag peptide' encoded by the tmRNA and targeted for degradation. The ribosome is freed to recommence translation, which seems to be the essential function of trans-translation.</text>
</comment>
<comment type="subcellular location">
    <subcellularLocation>
        <location evidence="1">Cytoplasm</location>
    </subcellularLocation>
    <text evidence="1">The tmRNA-SmpB complex associates with stalled 70S ribosomes.</text>
</comment>
<comment type="similarity">
    <text evidence="1">Belongs to the SmpB family.</text>
</comment>